<name>MNME_LEPCP</name>
<comment type="function">
    <text evidence="1">Exhibits a very high intrinsic GTPase hydrolysis rate. Involved in the addition of a carboxymethylaminomethyl (cmnm) group at the wobble position (U34) of certain tRNAs, forming tRNA-cmnm(5)s(2)U34.</text>
</comment>
<comment type="cofactor">
    <cofactor evidence="1">
        <name>K(+)</name>
        <dbReference type="ChEBI" id="CHEBI:29103"/>
    </cofactor>
    <text evidence="1">Binds 1 potassium ion per subunit.</text>
</comment>
<comment type="subunit">
    <text evidence="1">Homodimer. Heterotetramer of two MnmE and two MnmG subunits.</text>
</comment>
<comment type="subcellular location">
    <subcellularLocation>
        <location evidence="1">Cytoplasm</location>
    </subcellularLocation>
</comment>
<comment type="similarity">
    <text evidence="1">Belongs to the TRAFAC class TrmE-Era-EngA-EngB-Septin-like GTPase superfamily. TrmE GTPase family.</text>
</comment>
<accession>B1Y0F6</accession>
<organism>
    <name type="scientific">Leptothrix cholodnii (strain ATCC 51168 / LMG 8142 / SP-6)</name>
    <name type="common">Leptothrix discophora (strain SP-6)</name>
    <dbReference type="NCBI Taxonomy" id="395495"/>
    <lineage>
        <taxon>Bacteria</taxon>
        <taxon>Pseudomonadati</taxon>
        <taxon>Pseudomonadota</taxon>
        <taxon>Betaproteobacteria</taxon>
        <taxon>Burkholderiales</taxon>
        <taxon>Sphaerotilaceae</taxon>
        <taxon>Leptothrix</taxon>
    </lineage>
</organism>
<gene>
    <name evidence="1" type="primary">mnmE</name>
    <name evidence="1" type="synonym">trmE</name>
    <name type="ordered locus">Lcho_4384</name>
</gene>
<dbReference type="EC" id="3.6.-.-" evidence="1"/>
<dbReference type="EMBL" id="CP001013">
    <property type="protein sequence ID" value="ACB36635.1"/>
    <property type="molecule type" value="Genomic_DNA"/>
</dbReference>
<dbReference type="RefSeq" id="WP_012349376.1">
    <property type="nucleotide sequence ID" value="NC_010524.1"/>
</dbReference>
<dbReference type="SMR" id="B1Y0F6"/>
<dbReference type="STRING" id="395495.Lcho_4384"/>
<dbReference type="KEGG" id="lch:Lcho_4384"/>
<dbReference type="eggNOG" id="COG0486">
    <property type="taxonomic scope" value="Bacteria"/>
</dbReference>
<dbReference type="HOGENOM" id="CLU_019624_4_1_4"/>
<dbReference type="OrthoDB" id="9805918at2"/>
<dbReference type="Proteomes" id="UP000001693">
    <property type="component" value="Chromosome"/>
</dbReference>
<dbReference type="GO" id="GO:0005829">
    <property type="term" value="C:cytosol"/>
    <property type="evidence" value="ECO:0007669"/>
    <property type="project" value="TreeGrafter"/>
</dbReference>
<dbReference type="GO" id="GO:0005525">
    <property type="term" value="F:GTP binding"/>
    <property type="evidence" value="ECO:0007669"/>
    <property type="project" value="UniProtKB-UniRule"/>
</dbReference>
<dbReference type="GO" id="GO:0003924">
    <property type="term" value="F:GTPase activity"/>
    <property type="evidence" value="ECO:0007669"/>
    <property type="project" value="UniProtKB-UniRule"/>
</dbReference>
<dbReference type="GO" id="GO:0046872">
    <property type="term" value="F:metal ion binding"/>
    <property type="evidence" value="ECO:0007669"/>
    <property type="project" value="UniProtKB-KW"/>
</dbReference>
<dbReference type="GO" id="GO:0030488">
    <property type="term" value="P:tRNA methylation"/>
    <property type="evidence" value="ECO:0007669"/>
    <property type="project" value="TreeGrafter"/>
</dbReference>
<dbReference type="GO" id="GO:0002098">
    <property type="term" value="P:tRNA wobble uridine modification"/>
    <property type="evidence" value="ECO:0007669"/>
    <property type="project" value="TreeGrafter"/>
</dbReference>
<dbReference type="CDD" id="cd04164">
    <property type="entry name" value="trmE"/>
    <property type="match status" value="1"/>
</dbReference>
<dbReference type="CDD" id="cd14858">
    <property type="entry name" value="TrmE_N"/>
    <property type="match status" value="1"/>
</dbReference>
<dbReference type="Gene3D" id="3.40.50.300">
    <property type="entry name" value="P-loop containing nucleotide triphosphate hydrolases"/>
    <property type="match status" value="1"/>
</dbReference>
<dbReference type="Gene3D" id="3.30.1360.120">
    <property type="entry name" value="Probable tRNA modification gtpase trme, domain 1"/>
    <property type="match status" value="1"/>
</dbReference>
<dbReference type="Gene3D" id="1.20.120.430">
    <property type="entry name" value="tRNA modification GTPase MnmE domain 2"/>
    <property type="match status" value="1"/>
</dbReference>
<dbReference type="HAMAP" id="MF_00379">
    <property type="entry name" value="GTPase_MnmE"/>
    <property type="match status" value="1"/>
</dbReference>
<dbReference type="InterPro" id="IPR031168">
    <property type="entry name" value="G_TrmE"/>
</dbReference>
<dbReference type="InterPro" id="IPR006073">
    <property type="entry name" value="GTP-bd"/>
</dbReference>
<dbReference type="InterPro" id="IPR018948">
    <property type="entry name" value="GTP-bd_TrmE_N"/>
</dbReference>
<dbReference type="InterPro" id="IPR004520">
    <property type="entry name" value="GTPase_MnmE"/>
</dbReference>
<dbReference type="InterPro" id="IPR027368">
    <property type="entry name" value="MnmE_dom2"/>
</dbReference>
<dbReference type="InterPro" id="IPR025867">
    <property type="entry name" value="MnmE_helical"/>
</dbReference>
<dbReference type="InterPro" id="IPR027417">
    <property type="entry name" value="P-loop_NTPase"/>
</dbReference>
<dbReference type="InterPro" id="IPR005225">
    <property type="entry name" value="Small_GTP-bd"/>
</dbReference>
<dbReference type="InterPro" id="IPR027266">
    <property type="entry name" value="TrmE/GcvT_dom1"/>
</dbReference>
<dbReference type="NCBIfam" id="TIGR00450">
    <property type="entry name" value="mnmE_trmE_thdF"/>
    <property type="match status" value="1"/>
</dbReference>
<dbReference type="NCBIfam" id="NF003661">
    <property type="entry name" value="PRK05291.1-3"/>
    <property type="match status" value="1"/>
</dbReference>
<dbReference type="NCBIfam" id="TIGR00231">
    <property type="entry name" value="small_GTP"/>
    <property type="match status" value="1"/>
</dbReference>
<dbReference type="PANTHER" id="PTHR42714">
    <property type="entry name" value="TRNA MODIFICATION GTPASE GTPBP3"/>
    <property type="match status" value="1"/>
</dbReference>
<dbReference type="PANTHER" id="PTHR42714:SF2">
    <property type="entry name" value="TRNA MODIFICATION GTPASE GTPBP3, MITOCHONDRIAL"/>
    <property type="match status" value="1"/>
</dbReference>
<dbReference type="Pfam" id="PF01926">
    <property type="entry name" value="MMR_HSR1"/>
    <property type="match status" value="1"/>
</dbReference>
<dbReference type="Pfam" id="PF12631">
    <property type="entry name" value="MnmE_helical"/>
    <property type="match status" value="1"/>
</dbReference>
<dbReference type="Pfam" id="PF10396">
    <property type="entry name" value="TrmE_N"/>
    <property type="match status" value="1"/>
</dbReference>
<dbReference type="PRINTS" id="PR00326">
    <property type="entry name" value="GTP1OBG"/>
</dbReference>
<dbReference type="SUPFAM" id="SSF52540">
    <property type="entry name" value="P-loop containing nucleoside triphosphate hydrolases"/>
    <property type="match status" value="1"/>
</dbReference>
<dbReference type="SUPFAM" id="SSF116878">
    <property type="entry name" value="TrmE connector domain"/>
    <property type="match status" value="1"/>
</dbReference>
<dbReference type="PROSITE" id="PS51709">
    <property type="entry name" value="G_TRME"/>
    <property type="match status" value="1"/>
</dbReference>
<protein>
    <recommendedName>
        <fullName evidence="1">tRNA modification GTPase MnmE</fullName>
        <ecNumber evidence="1">3.6.-.-</ecNumber>
    </recommendedName>
</protein>
<evidence type="ECO:0000255" key="1">
    <source>
        <dbReference type="HAMAP-Rule" id="MF_00379"/>
    </source>
</evidence>
<feature type="chain" id="PRO_0000345822" description="tRNA modification GTPase MnmE">
    <location>
        <begin position="1"/>
        <end position="479"/>
    </location>
</feature>
<feature type="domain" description="TrmE-type G">
    <location>
        <begin position="230"/>
        <end position="401"/>
    </location>
</feature>
<feature type="binding site" evidence="1">
    <location>
        <position position="25"/>
    </location>
    <ligand>
        <name>(6S)-5-formyl-5,6,7,8-tetrahydrofolate</name>
        <dbReference type="ChEBI" id="CHEBI:57457"/>
    </ligand>
</feature>
<feature type="binding site" evidence="1">
    <location>
        <position position="82"/>
    </location>
    <ligand>
        <name>(6S)-5-formyl-5,6,7,8-tetrahydrofolate</name>
        <dbReference type="ChEBI" id="CHEBI:57457"/>
    </ligand>
</feature>
<feature type="binding site" evidence="1">
    <location>
        <position position="134"/>
    </location>
    <ligand>
        <name>(6S)-5-formyl-5,6,7,8-tetrahydrofolate</name>
        <dbReference type="ChEBI" id="CHEBI:57457"/>
    </ligand>
</feature>
<feature type="binding site" evidence="1">
    <location>
        <begin position="240"/>
        <end position="245"/>
    </location>
    <ligand>
        <name>GTP</name>
        <dbReference type="ChEBI" id="CHEBI:37565"/>
    </ligand>
</feature>
<feature type="binding site" evidence="1">
    <location>
        <position position="240"/>
    </location>
    <ligand>
        <name>K(+)</name>
        <dbReference type="ChEBI" id="CHEBI:29103"/>
    </ligand>
</feature>
<feature type="binding site" evidence="1">
    <location>
        <position position="244"/>
    </location>
    <ligand>
        <name>Mg(2+)</name>
        <dbReference type="ChEBI" id="CHEBI:18420"/>
    </ligand>
</feature>
<feature type="binding site" evidence="1">
    <location>
        <begin position="259"/>
        <end position="265"/>
    </location>
    <ligand>
        <name>GTP</name>
        <dbReference type="ChEBI" id="CHEBI:37565"/>
    </ligand>
</feature>
<feature type="binding site" evidence="1">
    <location>
        <position position="259"/>
    </location>
    <ligand>
        <name>K(+)</name>
        <dbReference type="ChEBI" id="CHEBI:29103"/>
    </ligand>
</feature>
<feature type="binding site" evidence="1">
    <location>
        <position position="261"/>
    </location>
    <ligand>
        <name>K(+)</name>
        <dbReference type="ChEBI" id="CHEBI:29103"/>
    </ligand>
</feature>
<feature type="binding site" evidence="1">
    <location>
        <position position="264"/>
    </location>
    <ligand>
        <name>K(+)</name>
        <dbReference type="ChEBI" id="CHEBI:29103"/>
    </ligand>
</feature>
<feature type="binding site" evidence="1">
    <location>
        <position position="265"/>
    </location>
    <ligand>
        <name>Mg(2+)</name>
        <dbReference type="ChEBI" id="CHEBI:18420"/>
    </ligand>
</feature>
<feature type="binding site" evidence="1">
    <location>
        <begin position="284"/>
        <end position="287"/>
    </location>
    <ligand>
        <name>GTP</name>
        <dbReference type="ChEBI" id="CHEBI:37565"/>
    </ligand>
</feature>
<feature type="binding site" evidence="1">
    <location>
        <begin position="352"/>
        <end position="355"/>
    </location>
    <ligand>
        <name>GTP</name>
        <dbReference type="ChEBI" id="CHEBI:37565"/>
    </ligand>
</feature>
<feature type="binding site" evidence="1">
    <location>
        <begin position="382"/>
        <end position="384"/>
    </location>
    <ligand>
        <name>GTP</name>
        <dbReference type="ChEBI" id="CHEBI:37565"/>
    </ligand>
</feature>
<feature type="binding site" evidence="1">
    <location>
        <position position="479"/>
    </location>
    <ligand>
        <name>(6S)-5-formyl-5,6,7,8-tetrahydrofolate</name>
        <dbReference type="ChEBI" id="CHEBI:57457"/>
    </ligand>
</feature>
<proteinExistence type="inferred from homology"/>
<sequence length="479" mass="50557">MLPRHHEPIAAIATAPGRGAVGIVRVSGRGLTALATALVGRPLRPRVASYGPFLDRQGGAIDRGLALHFPAPHSYTGEDVLELQAHGGPVVLQLLLARCLEAAGEIGTDGRPRLPGLRLAQPGEFTERAYLNDKLDLAQAEAVADLIDASTEAAARSAARSLSGDFSRQITHLRDGLIELRALVEATLDFPEEEIDFLQRADAHGRLARLAERLAGLLDTARQGALLREGLRVVIAGQPNAGKSSLLNALAGAELAIVTPIPGTTRDKISETIQIEGVPVHVIDTAGLRSDEQAGDEVERIGISRSWQAIAEADAVLLLHDLTREHEPAYSAADTAIAQRLPADVGLIHVHNKADAAPEQAARVAARLAARQAGDAAGVVLSARTHDGIDALRAALLARAGWHAAPEGVFIARERHVRALRAAATHVTAAQGWAEQSDSALDLLAEELRSAHDALAEITGSYSSDDLLGDIFGRFCIGK</sequence>
<reference key="1">
    <citation type="submission" date="2008-03" db="EMBL/GenBank/DDBJ databases">
        <title>Complete sequence of Leptothrix cholodnii SP-6.</title>
        <authorList>
            <consortium name="US DOE Joint Genome Institute"/>
            <person name="Copeland A."/>
            <person name="Lucas S."/>
            <person name="Lapidus A."/>
            <person name="Glavina del Rio T."/>
            <person name="Dalin E."/>
            <person name="Tice H."/>
            <person name="Bruce D."/>
            <person name="Goodwin L."/>
            <person name="Pitluck S."/>
            <person name="Chertkov O."/>
            <person name="Brettin T."/>
            <person name="Detter J.C."/>
            <person name="Han C."/>
            <person name="Kuske C.R."/>
            <person name="Schmutz J."/>
            <person name="Larimer F."/>
            <person name="Land M."/>
            <person name="Hauser L."/>
            <person name="Kyrpides N."/>
            <person name="Lykidis A."/>
            <person name="Emerson D."/>
            <person name="Richardson P."/>
        </authorList>
    </citation>
    <scope>NUCLEOTIDE SEQUENCE [LARGE SCALE GENOMIC DNA]</scope>
    <source>
        <strain>ATCC 51168 / LMG 8142 / SP-6</strain>
    </source>
</reference>
<keyword id="KW-0963">Cytoplasm</keyword>
<keyword id="KW-0342">GTP-binding</keyword>
<keyword id="KW-0378">Hydrolase</keyword>
<keyword id="KW-0460">Magnesium</keyword>
<keyword id="KW-0479">Metal-binding</keyword>
<keyword id="KW-0547">Nucleotide-binding</keyword>
<keyword id="KW-0630">Potassium</keyword>
<keyword id="KW-1185">Reference proteome</keyword>
<keyword id="KW-0819">tRNA processing</keyword>